<sequence length="597" mass="67111">MGHRIPEETIEAIRRGVDIVDVIGEYVQLKRQGRNYFGLCPFHGEKTPSFSVSPEKQIFHCFGCGAGGNAFTFLMDIEGIPFVEAAKRLAAKAGVDLSVYELDVRGRDDGQTDEAKAMTEAHALLKRFYHHLLVHTKEGQAALDYLQARGWTKETIDRFEIGYAPDAPDAAAKLLESHSFSLPVMEKAGLLTKKEDGRYVGRFRNRIMFPIHDHRGETVGFSGRLLGEGHPKYVNSPETPVFRKGAILYHFHAARVPIRKRQEALLVEGFADVISAAQAGIDYAIATMGTSLTEEQARILRPCDTITICYDGDRAGIEAAWAAAEQLSALGCRVKVASLPNGLDPDEYIRVYGGERFAGEAGCRRPLVAFKMAYLRRGKNLQHEGERLRYIDEALREIGKLSSPVEQDYYLRQLAEEFSLSLSALHEQLSRSQRERTKPREAPDGETARPMLAKKLLPAFQNAERLLLAHMMRSRDVALVVQERIGGRFNIEEHRALAAYIYAFYEEGHEADPGALISRIPGELQPLASDVSLLLIADDVSEQELEDYIRHVLNRPKWLMLKVKEQEKTEAERRKDFLTAARIAKEMIEMKKMLSSS</sequence>
<comment type="function">
    <text evidence="1">RNA polymerase that catalyzes the synthesis of short RNA molecules used as primers for DNA polymerase during DNA replication.</text>
</comment>
<comment type="catalytic activity">
    <reaction evidence="1">
        <text>ssDNA + n NTP = ssDNA/pppN(pN)n-1 hybrid + (n-1) diphosphate.</text>
        <dbReference type="EC" id="2.7.7.101"/>
    </reaction>
</comment>
<comment type="cofactor">
    <cofactor evidence="1 3 4 5">
        <name>Zn(2+)</name>
        <dbReference type="ChEBI" id="CHEBI:29105"/>
    </cofactor>
    <text evidence="1 5">Binds 1 zinc ion per monomer.</text>
</comment>
<comment type="cofactor">
    <cofactor evidence="1">
        <name>Mg(2+)</name>
        <dbReference type="ChEBI" id="CHEBI:18420"/>
    </cofactor>
    <text evidence="1">Binds two Mg(2+) per subunit.</text>
</comment>
<comment type="subunit">
    <text evidence="4 5 6 7 8">Monomer (PubMed:10625492). Interacts with replicative helicase DnaB, as DnaB(6):DnaG(3) (PubMed:10625492, PubMed:17947583, PubMed:24048025). A stable complex DnaI(6):DnaB(6):DnaG(3) fragment can be isolated; DnaI and DnaG do not contact each other (DnaI in this complex is derived from B.subtilis) (PubMed:24048025).</text>
</comment>
<comment type="interaction">
    <interactant intactId="EBI-6403005">
        <id>Q9X4D0</id>
    </interactant>
    <interactant intactId="EBI-6402993">
        <id>Q9X4C9</id>
        <label>dnaB</label>
    </interactant>
    <organismsDiffer>false</organismsDiffer>
    <experiments>7</experiments>
</comment>
<comment type="domain">
    <text evidence="10 11 12">Contains an N-terminal zinc-binding domain, a central core domain that contains the primase activity, and a C-terminal DnaB-binding domain.</text>
</comment>
<comment type="similarity">
    <text evidence="1">Belongs to the DnaG primase family.</text>
</comment>
<proteinExistence type="evidence at protein level"/>
<organism>
    <name type="scientific">Geobacillus stearothermophilus</name>
    <name type="common">Bacillus stearothermophilus</name>
    <dbReference type="NCBI Taxonomy" id="1422"/>
    <lineage>
        <taxon>Bacteria</taxon>
        <taxon>Bacillati</taxon>
        <taxon>Bacillota</taxon>
        <taxon>Bacilli</taxon>
        <taxon>Bacillales</taxon>
        <taxon>Anoxybacillaceae</taxon>
        <taxon>Geobacillus</taxon>
    </lineage>
</organism>
<evidence type="ECO:0000255" key="1">
    <source>
        <dbReference type="HAMAP-Rule" id="MF_00974"/>
    </source>
</evidence>
<evidence type="ECO:0000256" key="2">
    <source>
        <dbReference type="SAM" id="MobiDB-lite"/>
    </source>
</evidence>
<evidence type="ECO:0000269" key="3">
    <source>
    </source>
</evidence>
<evidence type="ECO:0000269" key="4">
    <source>
    </source>
</evidence>
<evidence type="ECO:0000269" key="5">
    <source>
    </source>
</evidence>
<evidence type="ECO:0000269" key="6">
    <source>
    </source>
</evidence>
<evidence type="ECO:0000269" key="7">
    <source>
    </source>
</evidence>
<evidence type="ECO:0000269" key="8">
    <source>
    </source>
</evidence>
<evidence type="ECO:0000303" key="9">
    <source>
    </source>
</evidence>
<evidence type="ECO:0000305" key="10">
    <source>
    </source>
</evidence>
<evidence type="ECO:0000305" key="11">
    <source>
    </source>
</evidence>
<evidence type="ECO:0000305" key="12">
    <source>
    </source>
</evidence>
<evidence type="ECO:0007744" key="13">
    <source>
        <dbReference type="PDB" id="1D0Q"/>
    </source>
</evidence>
<evidence type="ECO:0007744" key="14">
    <source>
        <dbReference type="PDB" id="1Z8S"/>
    </source>
</evidence>
<evidence type="ECO:0007744" key="15">
    <source>
        <dbReference type="PDB" id="2R6A"/>
    </source>
</evidence>
<evidence type="ECO:0007744" key="16">
    <source>
        <dbReference type="PDB" id="2R6C"/>
    </source>
</evidence>
<evidence type="ECO:0007744" key="17">
    <source>
        <dbReference type="PDB" id="4M4W"/>
    </source>
</evidence>
<evidence type="ECO:0007829" key="18">
    <source>
        <dbReference type="PDB" id="1D0Q"/>
    </source>
</evidence>
<evidence type="ECO:0007829" key="19">
    <source>
        <dbReference type="PDB" id="2R6A"/>
    </source>
</evidence>
<gene>
    <name evidence="1 9" type="primary">dnaG</name>
</gene>
<accession>Q9X4D0</accession>
<reference key="1">
    <citation type="journal article" date="1999" name="Biochim. Biophys. Acta">
        <title>Cloning, expression, and purification of Bacillus stearothermophilus DNA primase and crystallization of the zinc-binding domain.</title>
        <authorList>
            <person name="Pan H."/>
            <person name="Bird L.E."/>
            <person name="Wigley D.B."/>
        </authorList>
    </citation>
    <scope>NUCLEOTIDE SEQUENCE [GENOMIC DNA]</scope>
    <scope>CRYSTALLIZATION</scope>
    <scope>COFACTOR</scope>
    <source>
        <strain>ATCC 29609 / DSM 2027 / NCA 1503 / NCIMB 8924</strain>
    </source>
</reference>
<reference key="2">
    <citation type="journal article" date="2000" name="Biochemistry">
        <title>Mapping protein-protein interactions within a stable complex of DNA primase and DnaB helicase from Bacillus stearothermophilus.</title>
        <authorList>
            <person name="Bird L.E."/>
            <person name="Pan H."/>
            <person name="Soultanas P."/>
            <person name="Wigley D.B."/>
        </authorList>
    </citation>
    <scope>PROTEIN SEQUENCE OF 1-4; 102-114; 451-462 AND 594-597</scope>
    <scope>COFACTOR</scope>
    <scope>SUBUNIT</scope>
    <source>
        <strain>ATCC 29609 / DSM 2027 / NCA 1503 / NCIMB 8924</strain>
    </source>
</reference>
<reference evidence="13" key="3">
    <citation type="journal article" date="2000" name="Structure">
        <title>Structure of the zinc-binding domain of Bacillus stearothermophilus DNA primase.</title>
        <authorList>
            <person name="Pan H."/>
            <person name="Wigley D.B."/>
        </authorList>
    </citation>
    <scope>X-RAY CRYSTALLOGRAPHY (1.71 ANGSTROMS) OF 1-103 IN COMPLEX WITH ZINC</scope>
    <scope>COFACTOR</scope>
    <scope>DOMAIN</scope>
</reference>
<reference evidence="14" key="4">
    <citation type="journal article" date="2005" name="Structure">
        <title>Solution structure of the helicase-interaction domain of the primase DnaG: a model for helicase activation.</title>
        <authorList>
            <person name="Syson K."/>
            <person name="Thirlway J."/>
            <person name="Hounslow A.M."/>
            <person name="Soultanas P."/>
            <person name="Waltho J.P."/>
        </authorList>
    </citation>
    <scope>STRUCTURE BY NMR OF 453-597</scope>
    <scope>INTERACTION WITH DNAB</scope>
    <scope>DOMAIN</scope>
</reference>
<reference evidence="15 16" key="5">
    <citation type="journal article" date="2007" name="Science">
        <title>Structure of hexameric DnaB helicase and its complex with a domain of DnaG primase.</title>
        <authorList>
            <person name="Bailey S."/>
            <person name="Eliason W.K."/>
            <person name="Steitz T.A."/>
        </authorList>
    </citation>
    <scope>X-RAY CRYSTALLOGRAPHY (2.90 ANGSTROMS) OF 455-597 IN COMPLEX WITH DNAB</scope>
    <scope>INTERACTION WITH DNAB</scope>
    <scope>DOMAIN</scope>
</reference>
<reference evidence="17" key="6">
    <citation type="journal article" date="2013" name="Nat. Commun.">
        <title>Structure of a helicase-helicase loader complex reveals insights into the mechanism of bacterial primosome assembly.</title>
        <authorList>
            <person name="Liu B."/>
            <person name="Eliason W.K."/>
            <person name="Steitz T.A."/>
        </authorList>
    </citation>
    <scope>X-RAY CRYSTALLOGRAPHY (6.10 ANGSTROMS) OF 455-597 IN COMPLEX WITH DNAB AND DNAI OF B.SUBTILIS</scope>
</reference>
<protein>
    <recommendedName>
        <fullName evidence="1 9">DNA primase</fullName>
        <ecNumber evidence="1">2.7.7.101</ecNumber>
    </recommendedName>
</protein>
<name>DNAG_GEOSE</name>
<keyword id="KW-0002">3D-structure</keyword>
<keyword id="KW-0903">Direct protein sequencing</keyword>
<keyword id="KW-0235">DNA replication</keyword>
<keyword id="KW-0238">DNA-binding</keyword>
<keyword id="KW-0240">DNA-directed RNA polymerase</keyword>
<keyword id="KW-0460">Magnesium</keyword>
<keyword id="KW-0479">Metal-binding</keyword>
<keyword id="KW-0548">Nucleotidyltransferase</keyword>
<keyword id="KW-0639">Primosome</keyword>
<keyword id="KW-0804">Transcription</keyword>
<keyword id="KW-0808">Transferase</keyword>
<keyword id="KW-0862">Zinc</keyword>
<keyword id="KW-0863">Zinc-finger</keyword>
<dbReference type="EC" id="2.7.7.101" evidence="1"/>
<dbReference type="EMBL" id="AF106033">
    <property type="protein sequence ID" value="AAD20315.1"/>
    <property type="molecule type" value="Genomic_DNA"/>
</dbReference>
<dbReference type="PDB" id="1D0Q">
    <property type="method" value="X-ray"/>
    <property type="resolution" value="1.71 A"/>
    <property type="chains" value="A/B=1-103"/>
</dbReference>
<dbReference type="PDB" id="1Z8S">
    <property type="method" value="NMR"/>
    <property type="chains" value="A=452-597"/>
</dbReference>
<dbReference type="PDB" id="2R6A">
    <property type="method" value="X-ray"/>
    <property type="resolution" value="2.90 A"/>
    <property type="chains" value="C=455-597"/>
</dbReference>
<dbReference type="PDB" id="2R6C">
    <property type="method" value="X-ray"/>
    <property type="resolution" value="4.00 A"/>
    <property type="chains" value="G/H/I=455-597"/>
</dbReference>
<dbReference type="PDB" id="4M4W">
    <property type="method" value="X-ray"/>
    <property type="resolution" value="6.10 A"/>
    <property type="chains" value="G/H/I=455-597"/>
</dbReference>
<dbReference type="PDBsum" id="1D0Q"/>
<dbReference type="PDBsum" id="1Z8S"/>
<dbReference type="PDBsum" id="2R6A"/>
<dbReference type="PDBsum" id="2R6C"/>
<dbReference type="PDBsum" id="4M4W"/>
<dbReference type="BMRB" id="Q9X4D0"/>
<dbReference type="SMR" id="Q9X4D0"/>
<dbReference type="DIP" id="DIP-48436N"/>
<dbReference type="IntAct" id="Q9X4D0">
    <property type="interactions" value="1"/>
</dbReference>
<dbReference type="BRENDA" id="2.7.7.101">
    <property type="organism ID" value="623"/>
</dbReference>
<dbReference type="EvolutionaryTrace" id="Q9X4D0"/>
<dbReference type="GO" id="GO:0005737">
    <property type="term" value="C:cytoplasm"/>
    <property type="evidence" value="ECO:0007669"/>
    <property type="project" value="TreeGrafter"/>
</dbReference>
<dbReference type="GO" id="GO:0000428">
    <property type="term" value="C:DNA-directed RNA polymerase complex"/>
    <property type="evidence" value="ECO:0007669"/>
    <property type="project" value="UniProtKB-KW"/>
</dbReference>
<dbReference type="GO" id="GO:1990077">
    <property type="term" value="C:primosome complex"/>
    <property type="evidence" value="ECO:0007669"/>
    <property type="project" value="UniProtKB-KW"/>
</dbReference>
<dbReference type="GO" id="GO:0005524">
    <property type="term" value="F:ATP binding"/>
    <property type="evidence" value="ECO:0007669"/>
    <property type="project" value="InterPro"/>
</dbReference>
<dbReference type="GO" id="GO:0003677">
    <property type="term" value="F:DNA binding"/>
    <property type="evidence" value="ECO:0007669"/>
    <property type="project" value="UniProtKB-KW"/>
</dbReference>
<dbReference type="GO" id="GO:0003678">
    <property type="term" value="F:DNA helicase activity"/>
    <property type="evidence" value="ECO:0007669"/>
    <property type="project" value="InterPro"/>
</dbReference>
<dbReference type="GO" id="GO:0003899">
    <property type="term" value="F:DNA-directed RNA polymerase activity"/>
    <property type="evidence" value="ECO:0007669"/>
    <property type="project" value="InterPro"/>
</dbReference>
<dbReference type="GO" id="GO:0008270">
    <property type="term" value="F:zinc ion binding"/>
    <property type="evidence" value="ECO:0007669"/>
    <property type="project" value="UniProtKB-UniRule"/>
</dbReference>
<dbReference type="GO" id="GO:0006269">
    <property type="term" value="P:DNA replication, synthesis of primer"/>
    <property type="evidence" value="ECO:0007669"/>
    <property type="project" value="UniProtKB-UniRule"/>
</dbReference>
<dbReference type="CDD" id="cd03364">
    <property type="entry name" value="TOPRIM_DnaG_primases"/>
    <property type="match status" value="1"/>
</dbReference>
<dbReference type="FunFam" id="3.90.580.10:FF:000001">
    <property type="entry name" value="DNA primase"/>
    <property type="match status" value="1"/>
</dbReference>
<dbReference type="FunFam" id="3.90.980.10:FF:000001">
    <property type="entry name" value="DNA primase"/>
    <property type="match status" value="1"/>
</dbReference>
<dbReference type="Gene3D" id="3.40.1360.10">
    <property type="match status" value="1"/>
</dbReference>
<dbReference type="Gene3D" id="6.10.140.360">
    <property type="match status" value="1"/>
</dbReference>
<dbReference type="Gene3D" id="3.90.980.10">
    <property type="entry name" value="DNA primase, catalytic core, N-terminal domain"/>
    <property type="match status" value="1"/>
</dbReference>
<dbReference type="Gene3D" id="1.10.860.10">
    <property type="entry name" value="DNAb Helicase, Chain A"/>
    <property type="match status" value="1"/>
</dbReference>
<dbReference type="Gene3D" id="3.90.580.10">
    <property type="entry name" value="Zinc finger, CHC2-type domain"/>
    <property type="match status" value="1"/>
</dbReference>
<dbReference type="HAMAP" id="MF_00974">
    <property type="entry name" value="DNA_primase_DnaG"/>
    <property type="match status" value="1"/>
</dbReference>
<dbReference type="InterPro" id="IPR036185">
    <property type="entry name" value="DNA_heli_DnaB-like_N_sf"/>
</dbReference>
<dbReference type="InterPro" id="IPR016136">
    <property type="entry name" value="DNA_helicase_N/primase_C"/>
</dbReference>
<dbReference type="InterPro" id="IPR037068">
    <property type="entry name" value="DNA_primase_core_N_sf"/>
</dbReference>
<dbReference type="InterPro" id="IPR019475">
    <property type="entry name" value="DNA_primase_DnaB-bd"/>
</dbReference>
<dbReference type="InterPro" id="IPR006295">
    <property type="entry name" value="DNA_primase_DnaG"/>
</dbReference>
<dbReference type="InterPro" id="IPR036977">
    <property type="entry name" value="DNA_primase_Znf_CHC2"/>
</dbReference>
<dbReference type="InterPro" id="IPR030846">
    <property type="entry name" value="DnaG_bac"/>
</dbReference>
<dbReference type="InterPro" id="IPR013264">
    <property type="entry name" value="DNAG_N"/>
</dbReference>
<dbReference type="InterPro" id="IPR050219">
    <property type="entry name" value="DnaG_primase"/>
</dbReference>
<dbReference type="InterPro" id="IPR034151">
    <property type="entry name" value="TOPRIM_DnaG_bac"/>
</dbReference>
<dbReference type="InterPro" id="IPR006171">
    <property type="entry name" value="TOPRIM_dom"/>
</dbReference>
<dbReference type="InterPro" id="IPR002694">
    <property type="entry name" value="Znf_CHC2"/>
</dbReference>
<dbReference type="NCBIfam" id="TIGR01391">
    <property type="entry name" value="dnaG"/>
    <property type="match status" value="1"/>
</dbReference>
<dbReference type="PANTHER" id="PTHR30313">
    <property type="entry name" value="DNA PRIMASE"/>
    <property type="match status" value="1"/>
</dbReference>
<dbReference type="PANTHER" id="PTHR30313:SF2">
    <property type="entry name" value="DNA PRIMASE"/>
    <property type="match status" value="1"/>
</dbReference>
<dbReference type="Pfam" id="PF10410">
    <property type="entry name" value="DnaB_bind"/>
    <property type="match status" value="1"/>
</dbReference>
<dbReference type="Pfam" id="PF08275">
    <property type="entry name" value="DNAG_N"/>
    <property type="match status" value="1"/>
</dbReference>
<dbReference type="Pfam" id="PF13155">
    <property type="entry name" value="Toprim_2"/>
    <property type="match status" value="1"/>
</dbReference>
<dbReference type="Pfam" id="PF01807">
    <property type="entry name" value="Zn_ribbon_DnaG"/>
    <property type="match status" value="1"/>
</dbReference>
<dbReference type="PIRSF" id="PIRSF002811">
    <property type="entry name" value="DnaG"/>
    <property type="match status" value="1"/>
</dbReference>
<dbReference type="SMART" id="SM00493">
    <property type="entry name" value="TOPRIM"/>
    <property type="match status" value="1"/>
</dbReference>
<dbReference type="SMART" id="SM00400">
    <property type="entry name" value="ZnF_CHCC"/>
    <property type="match status" value="1"/>
</dbReference>
<dbReference type="SUPFAM" id="SSF56731">
    <property type="entry name" value="DNA primase core"/>
    <property type="match status" value="1"/>
</dbReference>
<dbReference type="SUPFAM" id="SSF48024">
    <property type="entry name" value="N-terminal domain of DnaB helicase"/>
    <property type="match status" value="1"/>
</dbReference>
<dbReference type="SUPFAM" id="SSF57783">
    <property type="entry name" value="Zinc beta-ribbon"/>
    <property type="match status" value="1"/>
</dbReference>
<dbReference type="PROSITE" id="PS50880">
    <property type="entry name" value="TOPRIM"/>
    <property type="match status" value="1"/>
</dbReference>
<feature type="chain" id="PRO_0000180478" description="DNA primase">
    <location>
        <begin position="1"/>
        <end position="597"/>
    </location>
</feature>
<feature type="domain" description="Toprim" evidence="1">
    <location>
        <begin position="262"/>
        <end position="342"/>
    </location>
</feature>
<feature type="zinc finger region" description="CHC2-type" evidence="1">
    <location>
        <begin position="40"/>
        <end position="64"/>
    </location>
</feature>
<feature type="region of interest" description="Disordered" evidence="2">
    <location>
        <begin position="429"/>
        <end position="448"/>
    </location>
</feature>
<feature type="compositionally biased region" description="Basic and acidic residues" evidence="2">
    <location>
        <begin position="429"/>
        <end position="447"/>
    </location>
</feature>
<feature type="binding site" evidence="13">
    <location>
        <position position="40"/>
    </location>
    <ligand>
        <name>Zn(2+)</name>
        <dbReference type="ChEBI" id="CHEBI:29105"/>
    </ligand>
</feature>
<feature type="binding site" evidence="13">
    <location>
        <position position="43"/>
    </location>
    <ligand>
        <name>Zn(2+)</name>
        <dbReference type="ChEBI" id="CHEBI:29105"/>
    </ligand>
</feature>
<feature type="binding site" evidence="13">
    <location>
        <position position="61"/>
    </location>
    <ligand>
        <name>Zn(2+)</name>
        <dbReference type="ChEBI" id="CHEBI:29105"/>
    </ligand>
</feature>
<feature type="binding site" evidence="13">
    <location>
        <position position="64"/>
    </location>
    <ligand>
        <name>Zn(2+)</name>
        <dbReference type="ChEBI" id="CHEBI:29105"/>
    </ligand>
</feature>
<feature type="binding site" evidence="1">
    <location>
        <position position="268"/>
    </location>
    <ligand>
        <name>Mg(2+)</name>
        <dbReference type="ChEBI" id="CHEBI:18420"/>
        <label>1</label>
        <note>catalytic</note>
    </ligand>
</feature>
<feature type="binding site" evidence="1">
    <location>
        <position position="311"/>
    </location>
    <ligand>
        <name>Mg(2+)</name>
        <dbReference type="ChEBI" id="CHEBI:18420"/>
        <label>1</label>
        <note>catalytic</note>
    </ligand>
</feature>
<feature type="binding site" evidence="1">
    <location>
        <position position="311"/>
    </location>
    <ligand>
        <name>Mg(2+)</name>
        <dbReference type="ChEBI" id="CHEBI:18420"/>
        <label>2</label>
    </ligand>
</feature>
<feature type="binding site" evidence="1">
    <location>
        <position position="313"/>
    </location>
    <ligand>
        <name>Mg(2+)</name>
        <dbReference type="ChEBI" id="CHEBI:18420"/>
        <label>2</label>
    </ligand>
</feature>
<feature type="helix" evidence="18">
    <location>
        <begin position="7"/>
        <end position="16"/>
    </location>
</feature>
<feature type="helix" evidence="18">
    <location>
        <begin position="19"/>
        <end position="23"/>
    </location>
</feature>
<feature type="turn" evidence="18">
    <location>
        <begin position="24"/>
        <end position="26"/>
    </location>
</feature>
<feature type="strand" evidence="18">
    <location>
        <begin position="30"/>
        <end position="32"/>
    </location>
</feature>
<feature type="strand" evidence="18">
    <location>
        <begin position="35"/>
        <end position="38"/>
    </location>
</feature>
<feature type="strand" evidence="18">
    <location>
        <begin position="41"/>
        <end position="43"/>
    </location>
</feature>
<feature type="strand" evidence="18">
    <location>
        <begin position="50"/>
        <end position="53"/>
    </location>
</feature>
<feature type="turn" evidence="18">
    <location>
        <begin position="54"/>
        <end position="57"/>
    </location>
</feature>
<feature type="strand" evidence="18">
    <location>
        <begin position="58"/>
        <end position="61"/>
    </location>
</feature>
<feature type="turn" evidence="18">
    <location>
        <begin position="62"/>
        <end position="64"/>
    </location>
</feature>
<feature type="helix" evidence="18">
    <location>
        <begin position="70"/>
        <end position="78"/>
    </location>
</feature>
<feature type="helix" evidence="18">
    <location>
        <begin position="82"/>
        <end position="93"/>
    </location>
</feature>
<feature type="helix" evidence="18">
    <location>
        <begin position="98"/>
        <end position="100"/>
    </location>
</feature>
<feature type="helix" evidence="19">
    <location>
        <begin position="459"/>
        <end position="471"/>
    </location>
</feature>
<feature type="helix" evidence="19">
    <location>
        <begin position="475"/>
        <end position="484"/>
    </location>
</feature>
<feature type="helix" evidence="19">
    <location>
        <begin position="492"/>
        <end position="505"/>
    </location>
</feature>
<feature type="helix" evidence="19">
    <location>
        <begin position="513"/>
        <end position="516"/>
    </location>
</feature>
<feature type="turn" evidence="19">
    <location>
        <begin position="517"/>
        <end position="519"/>
    </location>
</feature>
<feature type="strand" evidence="19">
    <location>
        <begin position="522"/>
        <end position="524"/>
    </location>
</feature>
<feature type="helix" evidence="19">
    <location>
        <begin position="525"/>
        <end position="531"/>
    </location>
</feature>
<feature type="helix" evidence="19">
    <location>
        <begin position="542"/>
        <end position="553"/>
    </location>
</feature>
<feature type="helix" evidence="19">
    <location>
        <begin position="555"/>
        <end position="573"/>
    </location>
</feature>
<feature type="helix" evidence="19">
    <location>
        <begin position="577"/>
        <end position="594"/>
    </location>
</feature>